<accession>A0A1D3TGZ2</accession>
<reference evidence="8" key="1">
    <citation type="submission" date="2016-06" db="EMBL/GenBank/DDBJ databases">
        <authorList>
            <consortium name="Pathogen Informatics"/>
        </authorList>
    </citation>
    <scope>NUCLEOTIDE SEQUENCE [LARGE SCALE GENOMIC DNA]</scope>
    <source>
        <strain evidence="7">PocGH01</strain>
    </source>
</reference>
<reference evidence="6" key="2">
    <citation type="journal article" date="2021" name="ChemMedChem">
        <title>Pentafluoro-3-hydroxy-pent-2-en-1-ones Potently Inhibit FNT-Type Lactate Transporters from all Five Human-Pathogenic Plasmodium Species.</title>
        <authorList>
            <person name="Walloch P."/>
            <person name="Hansen C."/>
            <person name="Priegann T."/>
            <person name="Schade D."/>
            <person name="Beitz E."/>
        </authorList>
    </citation>
    <scope>FUNCTION</scope>
    <scope>TRANSPORTER ACTIVITY</scope>
    <scope>ACTIVITY REGULATION</scope>
</reference>
<feature type="chain" id="PRO_0000461320" description="Formate-nitrite transporter">
    <location>
        <begin position="1"/>
        <end position="313"/>
    </location>
</feature>
<feature type="topological domain" description="Cytoplasmic" evidence="6">
    <location>
        <begin position="1"/>
        <end position="47"/>
    </location>
</feature>
<feature type="transmembrane region" description="Helical" evidence="2">
    <location>
        <begin position="48"/>
        <end position="68"/>
    </location>
</feature>
<feature type="topological domain" description="Extracellular" evidence="6">
    <location>
        <begin position="69"/>
        <end position="77"/>
    </location>
</feature>
<feature type="transmembrane region" description="Helical" evidence="2">
    <location>
        <begin position="78"/>
        <end position="98"/>
    </location>
</feature>
<feature type="topological domain" description="Cytoplasmic" evidence="6">
    <location>
        <begin position="99"/>
        <end position="128"/>
    </location>
</feature>
<feature type="transmembrane region" description="Helical" evidence="2">
    <location>
        <begin position="129"/>
        <end position="149"/>
    </location>
</feature>
<feature type="topological domain" description="Extracellular" evidence="6">
    <location>
        <begin position="150"/>
        <end position="185"/>
    </location>
</feature>
<feature type="transmembrane region" description="Helical" evidence="2">
    <location>
        <begin position="186"/>
        <end position="206"/>
    </location>
</feature>
<feature type="topological domain" description="Cytoplasmic" evidence="6">
    <location>
        <begin position="207"/>
        <end position="211"/>
    </location>
</feature>
<feature type="transmembrane region" description="Helical" evidence="2">
    <location>
        <begin position="212"/>
        <end position="232"/>
    </location>
</feature>
<feature type="topological domain" description="Extracellular" evidence="6">
    <location>
        <begin position="233"/>
        <end position="260"/>
    </location>
</feature>
<feature type="transmembrane region" description="Helical" evidence="2">
    <location>
        <begin position="261"/>
        <end position="281"/>
    </location>
</feature>
<feature type="topological domain" description="Cytoplasmic" evidence="6">
    <location>
        <begin position="282"/>
        <end position="313"/>
    </location>
</feature>
<feature type="glycosylation site" description="N-linked (GlcNAc...) asparagine" evidence="3">
    <location>
        <position position="179"/>
    </location>
</feature>
<feature type="glycosylation site" description="N-linked (GlcNAc...) asparagine" evidence="3">
    <location>
        <position position="239"/>
    </location>
</feature>
<name>FNT_PLAOA</name>
<comment type="function">
    <text evidence="1 4">Monocarboxylate-proton symporter that mediates the efflux of the waste product lactate in the intraerythrocytic parasites; active in acidic-to-neutral pH range (By similarity). Transports L-lactate (PubMed:33336890).</text>
</comment>
<comment type="catalytic activity">
    <reaction evidence="4">
        <text>(S)-lactate(in) + H(+)(in) = (S)-lactate(out) + H(+)(out)</text>
        <dbReference type="Rhea" id="RHEA:29415"/>
        <dbReference type="ChEBI" id="CHEBI:15378"/>
        <dbReference type="ChEBI" id="CHEBI:16651"/>
    </reaction>
</comment>
<comment type="catalytic activity">
    <reaction evidence="1">
        <text>formate(in) + H(+)(in) = formate(out) + H(+)(out)</text>
        <dbReference type="Rhea" id="RHEA:80887"/>
        <dbReference type="ChEBI" id="CHEBI:15378"/>
        <dbReference type="ChEBI" id="CHEBI:15740"/>
    </reaction>
</comment>
<comment type="catalytic activity">
    <reaction evidence="1">
        <text>pyruvate(out) + H(+)(out) = pyruvate(in) + H(+)(in)</text>
        <dbReference type="Rhea" id="RHEA:64720"/>
        <dbReference type="ChEBI" id="CHEBI:15361"/>
        <dbReference type="ChEBI" id="CHEBI:15378"/>
    </reaction>
</comment>
<comment type="catalytic activity">
    <reaction evidence="1">
        <text>acetate(out) + H(+)(out) = acetate(in) + H(+)(in)</text>
        <dbReference type="Rhea" id="RHEA:71803"/>
        <dbReference type="ChEBI" id="CHEBI:15378"/>
        <dbReference type="ChEBI" id="CHEBI:30089"/>
    </reaction>
</comment>
<comment type="activity regulation">
    <text evidence="4">Inhibited by the Malaria Box compound MMV007839 and its derivatives BH296 and BH267.meta.</text>
</comment>
<comment type="subunit">
    <text evidence="1">Homopentamer.</text>
</comment>
<comment type="subcellular location">
    <subcellularLocation>
        <location evidence="1">Cell membrane</location>
        <topology evidence="2">Multi-pass membrane protein</topology>
    </subcellularLocation>
    <subcellularLocation>
        <location evidence="1">Vacuole membrane</location>
        <topology evidence="2">Multi-pass membrane protein</topology>
    </subcellularLocation>
</comment>
<comment type="similarity">
    <text evidence="6">Belongs to the FNT transporter (TC 1.A.16) family.</text>
</comment>
<organism>
    <name type="scientific">Plasmodium ovale</name>
    <dbReference type="NCBI Taxonomy" id="36330"/>
    <lineage>
        <taxon>Eukaryota</taxon>
        <taxon>Sar</taxon>
        <taxon>Alveolata</taxon>
        <taxon>Apicomplexa</taxon>
        <taxon>Aconoidasida</taxon>
        <taxon>Haemosporida</taxon>
        <taxon>Plasmodiidae</taxon>
        <taxon>Plasmodium</taxon>
        <taxon>Plasmodium (Plasmodium)</taxon>
    </lineage>
</organism>
<protein>
    <recommendedName>
        <fullName evidence="6">Formate-nitrite transporter</fullName>
        <shortName evidence="5">PoFNT</shortName>
    </recommendedName>
    <alternativeName>
        <fullName evidence="5">FNT-type lactate transporter</fullName>
    </alternativeName>
</protein>
<sequence>MPKSNTKYVIDPLSVKTSCSSEESYIRCVEYGKSKAHYSSLILLAKAILAGVFVGVCAHASGIAGGLFYYHKLREYVGASMSAFVYGFTFPIAFLCIICTGSDLFTGNTLAVTTALLHGKVSCLEYVRVMCISLFGNYVGAVSFAFFVSYGSGAFHKKEQVDKNHIFQFLNDIAVKKVNHTFVECICLAIGCNIFVCLAVYFVLSIKDGSGMVFSVFFAVYAFAIAGYEHIIANIYTLNISLMIDTEVSFTQVYFKNLLPTLIGNYIAGALVLACPLFFIYRSYYINYEKMNEPSGGSLRSISIEMKNDGGAT</sequence>
<dbReference type="EMBL" id="LT594589">
    <property type="protein sequence ID" value="SCP04225.1"/>
    <property type="molecule type" value="Genomic_DNA"/>
</dbReference>
<dbReference type="SMR" id="A0A1D3TGZ2"/>
<dbReference type="VEuPathDB" id="PlasmoDB:PocGH01_08031900"/>
<dbReference type="VEuPathDB" id="PlasmoDB:POWCR01_080030000"/>
<dbReference type="OrthoDB" id="4829at2759"/>
<dbReference type="Proteomes" id="UP000242942">
    <property type="component" value="Chromosome 8"/>
</dbReference>
<dbReference type="GO" id="GO:0005886">
    <property type="term" value="C:plasma membrane"/>
    <property type="evidence" value="ECO:0007669"/>
    <property type="project" value="UniProtKB-SubCell"/>
</dbReference>
<dbReference type="GO" id="GO:0005774">
    <property type="term" value="C:vacuolar membrane"/>
    <property type="evidence" value="ECO:0007669"/>
    <property type="project" value="UniProtKB-SubCell"/>
</dbReference>
<dbReference type="GO" id="GO:0015513">
    <property type="term" value="F:high-affinity secondary active nitrite transmembrane transporter activity"/>
    <property type="evidence" value="ECO:0007669"/>
    <property type="project" value="TreeGrafter"/>
</dbReference>
<dbReference type="GO" id="GO:0015707">
    <property type="term" value="P:nitrite transport"/>
    <property type="evidence" value="ECO:0007669"/>
    <property type="project" value="TreeGrafter"/>
</dbReference>
<dbReference type="Gene3D" id="1.20.1080.10">
    <property type="entry name" value="Glycerol uptake facilitator protein"/>
    <property type="match status" value="1"/>
</dbReference>
<dbReference type="InterPro" id="IPR023271">
    <property type="entry name" value="Aquaporin-like"/>
</dbReference>
<dbReference type="InterPro" id="IPR000292">
    <property type="entry name" value="For/NO2_transpt"/>
</dbReference>
<dbReference type="InterPro" id="IPR024002">
    <property type="entry name" value="For/NO2_transpt_CS"/>
</dbReference>
<dbReference type="NCBIfam" id="TIGR00790">
    <property type="entry name" value="fnt"/>
    <property type="match status" value="1"/>
</dbReference>
<dbReference type="PANTHER" id="PTHR30520">
    <property type="entry name" value="FORMATE TRANSPORTER-RELATED"/>
    <property type="match status" value="1"/>
</dbReference>
<dbReference type="PANTHER" id="PTHR30520:SF6">
    <property type="entry name" value="FORMATE_NITRATE FAMILY TRANSPORTER (EUROFUNG)"/>
    <property type="match status" value="1"/>
</dbReference>
<dbReference type="Pfam" id="PF01226">
    <property type="entry name" value="Form_Nir_trans"/>
    <property type="match status" value="1"/>
</dbReference>
<dbReference type="PROSITE" id="PS01006">
    <property type="entry name" value="FORMATE_NITRITE_TP_2"/>
    <property type="match status" value="1"/>
</dbReference>
<proteinExistence type="inferred from homology"/>
<keyword id="KW-1003">Cell membrane</keyword>
<keyword id="KW-0325">Glycoprotein</keyword>
<keyword id="KW-0472">Membrane</keyword>
<keyword id="KW-1185">Reference proteome</keyword>
<keyword id="KW-0812">Transmembrane</keyword>
<keyword id="KW-1133">Transmembrane helix</keyword>
<keyword id="KW-0813">Transport</keyword>
<keyword id="KW-0926">Vacuole</keyword>
<gene>
    <name evidence="7" type="primary">FNT</name>
    <name evidence="7" type="ORF">POCGH01_08031900</name>
</gene>
<evidence type="ECO:0000250" key="1">
    <source>
        <dbReference type="UniProtKB" id="O77389"/>
    </source>
</evidence>
<evidence type="ECO:0000255" key="2"/>
<evidence type="ECO:0000255" key="3">
    <source>
        <dbReference type="PROSITE-ProRule" id="PRU00498"/>
    </source>
</evidence>
<evidence type="ECO:0000269" key="4">
    <source>
    </source>
</evidence>
<evidence type="ECO:0000303" key="5">
    <source>
    </source>
</evidence>
<evidence type="ECO:0000305" key="6"/>
<evidence type="ECO:0000312" key="7">
    <source>
        <dbReference type="EMBL" id="SCP04225.1"/>
    </source>
</evidence>
<evidence type="ECO:0000312" key="8">
    <source>
        <dbReference type="Proteomes" id="UP000242942"/>
    </source>
</evidence>